<proteinExistence type="inferred from homology"/>
<name>NUSB_MYCSK</name>
<accession>A1UFJ6</accession>
<keyword id="KW-0694">RNA-binding</keyword>
<keyword id="KW-0804">Transcription</keyword>
<keyword id="KW-0889">Transcription antitermination</keyword>
<keyword id="KW-0805">Transcription regulation</keyword>
<dbReference type="EMBL" id="CP000518">
    <property type="protein sequence ID" value="ABL91604.1"/>
    <property type="molecule type" value="Genomic_DNA"/>
</dbReference>
<dbReference type="SMR" id="A1UFJ6"/>
<dbReference type="STRING" id="189918.Mkms_2406"/>
<dbReference type="KEGG" id="mkm:Mkms_2406"/>
<dbReference type="HOGENOM" id="CLU_087843_2_3_11"/>
<dbReference type="OrthoDB" id="3528057at2"/>
<dbReference type="GO" id="GO:0005829">
    <property type="term" value="C:cytosol"/>
    <property type="evidence" value="ECO:0007669"/>
    <property type="project" value="TreeGrafter"/>
</dbReference>
<dbReference type="GO" id="GO:0003723">
    <property type="term" value="F:RNA binding"/>
    <property type="evidence" value="ECO:0007669"/>
    <property type="project" value="UniProtKB-UniRule"/>
</dbReference>
<dbReference type="GO" id="GO:0006353">
    <property type="term" value="P:DNA-templated transcription termination"/>
    <property type="evidence" value="ECO:0007669"/>
    <property type="project" value="UniProtKB-UniRule"/>
</dbReference>
<dbReference type="GO" id="GO:0031564">
    <property type="term" value="P:transcription antitermination"/>
    <property type="evidence" value="ECO:0007669"/>
    <property type="project" value="UniProtKB-KW"/>
</dbReference>
<dbReference type="CDD" id="cd00619">
    <property type="entry name" value="Terminator_NusB"/>
    <property type="match status" value="1"/>
</dbReference>
<dbReference type="Gene3D" id="1.10.940.10">
    <property type="entry name" value="NusB-like"/>
    <property type="match status" value="1"/>
</dbReference>
<dbReference type="HAMAP" id="MF_00073">
    <property type="entry name" value="NusB"/>
    <property type="match status" value="1"/>
</dbReference>
<dbReference type="InterPro" id="IPR035926">
    <property type="entry name" value="NusB-like_sf"/>
</dbReference>
<dbReference type="InterPro" id="IPR011605">
    <property type="entry name" value="NusB_fam"/>
</dbReference>
<dbReference type="InterPro" id="IPR006027">
    <property type="entry name" value="NusB_RsmB_TIM44"/>
</dbReference>
<dbReference type="NCBIfam" id="TIGR01951">
    <property type="entry name" value="nusB"/>
    <property type="match status" value="1"/>
</dbReference>
<dbReference type="PANTHER" id="PTHR11078:SF3">
    <property type="entry name" value="ANTITERMINATION NUSB DOMAIN-CONTAINING PROTEIN"/>
    <property type="match status" value="1"/>
</dbReference>
<dbReference type="PANTHER" id="PTHR11078">
    <property type="entry name" value="N UTILIZATION SUBSTANCE PROTEIN B-RELATED"/>
    <property type="match status" value="1"/>
</dbReference>
<dbReference type="Pfam" id="PF01029">
    <property type="entry name" value="NusB"/>
    <property type="match status" value="1"/>
</dbReference>
<dbReference type="SUPFAM" id="SSF48013">
    <property type="entry name" value="NusB-like"/>
    <property type="match status" value="1"/>
</dbReference>
<gene>
    <name evidence="1" type="primary">nusB</name>
    <name type="ordered locus">Mkms_2406</name>
</gene>
<reference key="1">
    <citation type="submission" date="2006-12" db="EMBL/GenBank/DDBJ databases">
        <title>Complete sequence of chromosome of Mycobacterium sp. KMS.</title>
        <authorList>
            <consortium name="US DOE Joint Genome Institute"/>
            <person name="Copeland A."/>
            <person name="Lucas S."/>
            <person name="Lapidus A."/>
            <person name="Barry K."/>
            <person name="Detter J.C."/>
            <person name="Glavina del Rio T."/>
            <person name="Hammon N."/>
            <person name="Israni S."/>
            <person name="Dalin E."/>
            <person name="Tice H."/>
            <person name="Pitluck S."/>
            <person name="Kiss H."/>
            <person name="Brettin T."/>
            <person name="Bruce D."/>
            <person name="Han C."/>
            <person name="Tapia R."/>
            <person name="Gilna P."/>
            <person name="Schmutz J."/>
            <person name="Larimer F."/>
            <person name="Land M."/>
            <person name="Hauser L."/>
            <person name="Kyrpides N."/>
            <person name="Mikhailova N."/>
            <person name="Miller C.D."/>
            <person name="Richardson P."/>
        </authorList>
    </citation>
    <scope>NUCLEOTIDE SEQUENCE [LARGE SCALE GENOMIC DNA]</scope>
    <source>
        <strain>KMS</strain>
    </source>
</reference>
<comment type="function">
    <text evidence="1">Involved in transcription antitermination. Required for transcription of ribosomal RNA (rRNA) genes. Binds specifically to the boxA antiterminator sequence of the ribosomal RNA (rrn) operons.</text>
</comment>
<comment type="similarity">
    <text evidence="1">Belongs to the NusB family.</text>
</comment>
<sequence>MSDRRPDRGRHQARKRAVDLLFEAEARGLTAAEVATSRNKLAGTQPDVTALNPYTVTVARGVTDHRDHIDDLISAHLQGWTLDRLPAVDRAILRVAVWELLHAEDVPEPVAVDEAVELAKQLSTDDSPGFVNGVLGQVMLVTPQIRAASQAVRESAQGPSEG</sequence>
<organism>
    <name type="scientific">Mycobacterium sp. (strain KMS)</name>
    <dbReference type="NCBI Taxonomy" id="189918"/>
    <lineage>
        <taxon>Bacteria</taxon>
        <taxon>Bacillati</taxon>
        <taxon>Actinomycetota</taxon>
        <taxon>Actinomycetes</taxon>
        <taxon>Mycobacteriales</taxon>
        <taxon>Mycobacteriaceae</taxon>
        <taxon>Mycobacterium</taxon>
    </lineage>
</organism>
<evidence type="ECO:0000255" key="1">
    <source>
        <dbReference type="HAMAP-Rule" id="MF_00073"/>
    </source>
</evidence>
<feature type="chain" id="PRO_1000023751" description="Transcription antitermination protein NusB">
    <location>
        <begin position="1"/>
        <end position="162"/>
    </location>
</feature>
<protein>
    <recommendedName>
        <fullName evidence="1">Transcription antitermination protein NusB</fullName>
    </recommendedName>
    <alternativeName>
        <fullName evidence="1">Antitermination factor NusB</fullName>
    </alternativeName>
</protein>